<feature type="signal peptide" evidence="3">
    <location>
        <begin position="1"/>
        <end position="31"/>
    </location>
</feature>
<feature type="chain" id="PRO_0000071047" description="DnaJ homolog subfamily C member 3">
    <location>
        <begin position="32"/>
        <end position="504"/>
    </location>
</feature>
<feature type="repeat" description="TPR 1">
    <location>
        <begin position="37"/>
        <end position="70"/>
    </location>
</feature>
<feature type="repeat" description="TPR 2">
    <location>
        <begin position="72"/>
        <end position="104"/>
    </location>
</feature>
<feature type="repeat" description="TPR 3">
    <location>
        <begin position="105"/>
        <end position="138"/>
    </location>
</feature>
<feature type="repeat" description="TPR 4">
    <location>
        <begin position="154"/>
        <end position="187"/>
    </location>
</feature>
<feature type="repeat" description="TPR 5">
    <location>
        <begin position="188"/>
        <end position="221"/>
    </location>
</feature>
<feature type="repeat" description="TPR 6">
    <location>
        <begin position="222"/>
        <end position="255"/>
    </location>
</feature>
<feature type="repeat" description="TPR 7">
    <location>
        <begin position="268"/>
        <end position="301"/>
    </location>
</feature>
<feature type="repeat" description="TPR 8">
    <location>
        <begin position="306"/>
        <end position="339"/>
    </location>
</feature>
<feature type="repeat" description="TPR 9">
    <location>
        <begin position="340"/>
        <end position="373"/>
    </location>
</feature>
<feature type="domain" description="J" evidence="4">
    <location>
        <begin position="394"/>
        <end position="462"/>
    </location>
</feature>
<feature type="region of interest" description="Flexible linker" evidence="1">
    <location>
        <begin position="375"/>
        <end position="393"/>
    </location>
</feature>
<feature type="region of interest" description="Disordered" evidence="5">
    <location>
        <begin position="451"/>
        <end position="481"/>
    </location>
</feature>
<feature type="modified residue" description="Phosphoserine" evidence="2">
    <location>
        <position position="274"/>
    </location>
</feature>
<feature type="modified residue" description="Phosphoserine" evidence="7">
    <location>
        <position position="475"/>
    </location>
</feature>
<feature type="disulfide bond" evidence="1">
    <location>
        <begin position="248"/>
        <end position="258"/>
    </location>
</feature>
<feature type="disulfide bond" evidence="1">
    <location>
        <begin position="313"/>
        <end position="329"/>
    </location>
</feature>
<feature type="sequence conflict" description="In Ref. 1; BAA86882." evidence="6" ref="1">
    <original>I</original>
    <variation>V</variation>
    <location>
        <position position="312"/>
    </location>
</feature>
<feature type="sequence conflict" description="In Ref. 1; BAA86882." evidence="6" ref="1">
    <original>A</original>
    <variation>T</variation>
    <location>
        <position position="347"/>
    </location>
</feature>
<sequence length="504" mass="57561">MVAPGSVRSRLGAVFPFLLVLVDLQYEGAECGVNADVEKHLELGKKLLAAGQLADALSQFHAAVDGDPDNYIAYYRRATVFLAMGKSKAALPDLTRVIELKMDFTAARLQRGHLLLKQGRLAEAEDDFKKVLKSNPSENEEKEAQSQLVKADEMQRLRAQALDAFDSADYTAAITFLDEILEVCVWDAELRELRAECFIKEGEPRKAISDLKAASKLKNDNTEAFYKISILYYQLGDHELSLSEVRECLKLDQDHKRCFAHYKQVKKLNKLIGSAEELIRDGRYTDATSKYESVMKAEPSVAEYTVRSKERICHCFSKDEKPVEAIKICSEVLQLEPDNVNALKDRAEAYLIEEMYDEAIQDYEAAQEQNENDQQIREGLEKAQRLLKQSQKRDYYKILGVKRNAKKQEIIKAYRKLALQWHPDNFQSEEEKKKAEKKFIDIAAAKEVLSDPEMRRKFDDGEDPLDAETQQGGGSNPFHRSWDSWQGFNPFSSGGPFRFKFHFN</sequence>
<accession>Q9R0T3</accession>
<accession>Q6P7A0</accession>
<protein>
    <recommendedName>
        <fullName>DnaJ homolog subfamily C member 3</fullName>
    </recommendedName>
    <alternativeName>
        <fullName>Interferon-induced, double-stranded RNA-activated protein kinase inhibitor</fullName>
    </alternativeName>
    <alternativeName>
        <fullName>Protein kinase inhibitor of 58 kDa</fullName>
        <shortName>Protein kinase inhibitor p58</shortName>
    </alternativeName>
</protein>
<dbReference type="EMBL" id="AB017702">
    <property type="protein sequence ID" value="BAA86882.3"/>
    <property type="molecule type" value="mRNA"/>
</dbReference>
<dbReference type="EMBL" id="BC061764">
    <property type="protein sequence ID" value="AAH61764.1"/>
    <property type="status" value="ALT_SEQ"/>
    <property type="molecule type" value="mRNA"/>
</dbReference>
<dbReference type="RefSeq" id="NP_071568.2">
    <property type="nucleotide sequence ID" value="NM_022232.2"/>
</dbReference>
<dbReference type="SMR" id="Q9R0T3"/>
<dbReference type="FunCoup" id="Q9R0T3">
    <property type="interactions" value="3064"/>
</dbReference>
<dbReference type="IntAct" id="Q9R0T3">
    <property type="interactions" value="6"/>
</dbReference>
<dbReference type="STRING" id="10116.ENSRNOP00000014182"/>
<dbReference type="iPTMnet" id="Q9R0T3"/>
<dbReference type="PhosphoSitePlus" id="Q9R0T3"/>
<dbReference type="jPOST" id="Q9R0T3"/>
<dbReference type="PaxDb" id="10116-ENSRNOP00000014182"/>
<dbReference type="Ensembl" id="ENSRNOT00000014182.6">
    <property type="protein sequence ID" value="ENSRNOP00000014182.2"/>
    <property type="gene ID" value="ENSRNOG00000010352.6"/>
</dbReference>
<dbReference type="GeneID" id="63880"/>
<dbReference type="KEGG" id="rno:63880"/>
<dbReference type="UCSC" id="RGD:708518">
    <property type="organism name" value="rat"/>
</dbReference>
<dbReference type="AGR" id="RGD:708518"/>
<dbReference type="CTD" id="5611"/>
<dbReference type="RGD" id="708518">
    <property type="gene designation" value="Dnajc3"/>
</dbReference>
<dbReference type="eggNOG" id="KOG0624">
    <property type="taxonomic scope" value="Eukaryota"/>
</dbReference>
<dbReference type="GeneTree" id="ENSGT00940000159806"/>
<dbReference type="HOGENOM" id="CLU_015935_0_0_1"/>
<dbReference type="InParanoid" id="Q9R0T3"/>
<dbReference type="OMA" id="PFAHFQH"/>
<dbReference type="OrthoDB" id="1726119at2759"/>
<dbReference type="PhylomeDB" id="Q9R0T3"/>
<dbReference type="TreeFam" id="TF105162"/>
<dbReference type="Reactome" id="R-RNO-381426">
    <property type="pathway name" value="Regulation of Insulin-like Growth Factor (IGF) transport and uptake by Insulin-like Growth Factor Binding Proteins (IGFBPs)"/>
</dbReference>
<dbReference type="Reactome" id="R-RNO-6798695">
    <property type="pathway name" value="Neutrophil degranulation"/>
</dbReference>
<dbReference type="Reactome" id="R-RNO-8957275">
    <property type="pathway name" value="Post-translational protein phosphorylation"/>
</dbReference>
<dbReference type="Reactome" id="R-RNO-9833482">
    <property type="pathway name" value="PKR-mediated signaling"/>
</dbReference>
<dbReference type="PRO" id="PR:Q9R0T3"/>
<dbReference type="Proteomes" id="UP000002494">
    <property type="component" value="Chromosome 15"/>
</dbReference>
<dbReference type="Bgee" id="ENSRNOG00000010352">
    <property type="expression patterns" value="Expressed in pancreas and 19 other cell types or tissues"/>
</dbReference>
<dbReference type="ExpressionAtlas" id="Q9R0T3">
    <property type="expression patterns" value="baseline and differential"/>
</dbReference>
<dbReference type="GO" id="GO:0005737">
    <property type="term" value="C:cytoplasm"/>
    <property type="evidence" value="ECO:0000266"/>
    <property type="project" value="RGD"/>
</dbReference>
<dbReference type="GO" id="GO:0005829">
    <property type="term" value="C:cytosol"/>
    <property type="evidence" value="ECO:0000250"/>
    <property type="project" value="UniProtKB"/>
</dbReference>
<dbReference type="GO" id="GO:0005783">
    <property type="term" value="C:endoplasmic reticulum"/>
    <property type="evidence" value="ECO:0000266"/>
    <property type="project" value="RGD"/>
</dbReference>
<dbReference type="GO" id="GO:0005788">
    <property type="term" value="C:endoplasmic reticulum lumen"/>
    <property type="evidence" value="ECO:0000266"/>
    <property type="project" value="RGD"/>
</dbReference>
<dbReference type="GO" id="GO:0005790">
    <property type="term" value="C:smooth endoplasmic reticulum"/>
    <property type="evidence" value="ECO:0000314"/>
    <property type="project" value="UniProtKB"/>
</dbReference>
<dbReference type="GO" id="GO:0051787">
    <property type="term" value="F:misfolded protein binding"/>
    <property type="evidence" value="ECO:0000266"/>
    <property type="project" value="RGD"/>
</dbReference>
<dbReference type="GO" id="GO:0019901">
    <property type="term" value="F:protein kinase binding"/>
    <property type="evidence" value="ECO:0000250"/>
    <property type="project" value="UniProtKB"/>
</dbReference>
<dbReference type="GO" id="GO:0004860">
    <property type="term" value="F:protein kinase inhibitor activity"/>
    <property type="evidence" value="ECO:0000250"/>
    <property type="project" value="UniProtKB"/>
</dbReference>
<dbReference type="GO" id="GO:0051087">
    <property type="term" value="F:protein-folding chaperone binding"/>
    <property type="evidence" value="ECO:0000266"/>
    <property type="project" value="RGD"/>
</dbReference>
<dbReference type="GO" id="GO:0070417">
    <property type="term" value="P:cellular response to cold"/>
    <property type="evidence" value="ECO:0000250"/>
    <property type="project" value="UniProtKB"/>
</dbReference>
<dbReference type="GO" id="GO:0043066">
    <property type="term" value="P:negative regulation of apoptotic process"/>
    <property type="evidence" value="ECO:0000266"/>
    <property type="project" value="RGD"/>
</dbReference>
<dbReference type="GO" id="GO:1903912">
    <property type="term" value="P:negative regulation of endoplasmic reticulum stress-induced eIF2 alpha phosphorylation"/>
    <property type="evidence" value="ECO:0000250"/>
    <property type="project" value="UniProtKB"/>
</dbReference>
<dbReference type="GO" id="GO:1902010">
    <property type="term" value="P:negative regulation of translation in response to endoplasmic reticulum stress"/>
    <property type="evidence" value="ECO:0000266"/>
    <property type="project" value="RGD"/>
</dbReference>
<dbReference type="GO" id="GO:0036494">
    <property type="term" value="P:positive regulation of translation initiation in response to endoplasmic reticulum stress"/>
    <property type="evidence" value="ECO:0000250"/>
    <property type="project" value="UniProtKB"/>
</dbReference>
<dbReference type="GO" id="GO:0034975">
    <property type="term" value="P:protein folding in endoplasmic reticulum"/>
    <property type="evidence" value="ECO:0000318"/>
    <property type="project" value="GO_Central"/>
</dbReference>
<dbReference type="GO" id="GO:0051603">
    <property type="term" value="P:proteolysis involved in protein catabolic process"/>
    <property type="evidence" value="ECO:0000266"/>
    <property type="project" value="RGD"/>
</dbReference>
<dbReference type="GO" id="GO:0034976">
    <property type="term" value="P:response to endoplasmic reticulum stress"/>
    <property type="evidence" value="ECO:0000266"/>
    <property type="project" value="RGD"/>
</dbReference>
<dbReference type="GO" id="GO:0006986">
    <property type="term" value="P:response to unfolded protein"/>
    <property type="evidence" value="ECO:0007669"/>
    <property type="project" value="UniProtKB-KW"/>
</dbReference>
<dbReference type="CDD" id="cd06257">
    <property type="entry name" value="DnaJ"/>
    <property type="match status" value="1"/>
</dbReference>
<dbReference type="FunFam" id="1.25.40.10:FF:000122">
    <property type="entry name" value="DnaJ (Hsp40) homolog, subfamily C, member 3"/>
    <property type="match status" value="1"/>
</dbReference>
<dbReference type="FunFam" id="1.10.287.110:FF:000015">
    <property type="entry name" value="dnaJ homolog subfamily C member 3"/>
    <property type="match status" value="1"/>
</dbReference>
<dbReference type="Gene3D" id="1.10.287.110">
    <property type="entry name" value="DnaJ domain"/>
    <property type="match status" value="1"/>
</dbReference>
<dbReference type="Gene3D" id="1.25.40.10">
    <property type="entry name" value="Tetratricopeptide repeat domain"/>
    <property type="match status" value="1"/>
</dbReference>
<dbReference type="InterPro" id="IPR051727">
    <property type="entry name" value="DnaJ_C3_Co-chaperones"/>
</dbReference>
<dbReference type="InterPro" id="IPR001623">
    <property type="entry name" value="DnaJ_domain"/>
</dbReference>
<dbReference type="InterPro" id="IPR036869">
    <property type="entry name" value="J_dom_sf"/>
</dbReference>
<dbReference type="InterPro" id="IPR011990">
    <property type="entry name" value="TPR-like_helical_dom_sf"/>
</dbReference>
<dbReference type="InterPro" id="IPR019734">
    <property type="entry name" value="TPR_rpt"/>
</dbReference>
<dbReference type="PANTHER" id="PTHR44140:SF3">
    <property type="entry name" value="DNAJ HOMOLOG SUBFAMILY C MEMBER 3"/>
    <property type="match status" value="1"/>
</dbReference>
<dbReference type="PANTHER" id="PTHR44140">
    <property type="entry name" value="LD25575P"/>
    <property type="match status" value="1"/>
</dbReference>
<dbReference type="Pfam" id="PF00226">
    <property type="entry name" value="DnaJ"/>
    <property type="match status" value="1"/>
</dbReference>
<dbReference type="Pfam" id="PF13432">
    <property type="entry name" value="TPR_16"/>
    <property type="match status" value="1"/>
</dbReference>
<dbReference type="Pfam" id="PF14559">
    <property type="entry name" value="TPR_19"/>
    <property type="match status" value="1"/>
</dbReference>
<dbReference type="Pfam" id="PF13181">
    <property type="entry name" value="TPR_8"/>
    <property type="match status" value="2"/>
</dbReference>
<dbReference type="PRINTS" id="PR00625">
    <property type="entry name" value="JDOMAIN"/>
</dbReference>
<dbReference type="SMART" id="SM00271">
    <property type="entry name" value="DnaJ"/>
    <property type="match status" value="1"/>
</dbReference>
<dbReference type="SMART" id="SM00028">
    <property type="entry name" value="TPR"/>
    <property type="match status" value="7"/>
</dbReference>
<dbReference type="SUPFAM" id="SSF46565">
    <property type="entry name" value="Chaperone J-domain"/>
    <property type="match status" value="1"/>
</dbReference>
<dbReference type="SUPFAM" id="SSF48452">
    <property type="entry name" value="TPR-like"/>
    <property type="match status" value="1"/>
</dbReference>
<dbReference type="PROSITE" id="PS50076">
    <property type="entry name" value="DNAJ_2"/>
    <property type="match status" value="1"/>
</dbReference>
<dbReference type="PROSITE" id="PS50005">
    <property type="entry name" value="TPR"/>
    <property type="match status" value="8"/>
</dbReference>
<dbReference type="PROSITE" id="PS50293">
    <property type="entry name" value="TPR_REGION"/>
    <property type="match status" value="1"/>
</dbReference>
<keyword id="KW-1015">Disulfide bond</keyword>
<keyword id="KW-0256">Endoplasmic reticulum</keyword>
<keyword id="KW-0597">Phosphoprotein</keyword>
<keyword id="KW-1185">Reference proteome</keyword>
<keyword id="KW-0677">Repeat</keyword>
<keyword id="KW-0732">Signal</keyword>
<keyword id="KW-0802">TPR repeat</keyword>
<keyword id="KW-0834">Unfolded protein response</keyword>
<evidence type="ECO:0000250" key="1"/>
<evidence type="ECO:0000250" key="2">
    <source>
        <dbReference type="UniProtKB" id="Q13217"/>
    </source>
</evidence>
<evidence type="ECO:0000255" key="3"/>
<evidence type="ECO:0000255" key="4">
    <source>
        <dbReference type="PROSITE-ProRule" id="PRU00286"/>
    </source>
</evidence>
<evidence type="ECO:0000256" key="5">
    <source>
        <dbReference type="SAM" id="MobiDB-lite"/>
    </source>
</evidence>
<evidence type="ECO:0000305" key="6"/>
<evidence type="ECO:0007744" key="7">
    <source>
    </source>
</evidence>
<proteinExistence type="evidence at protein level"/>
<reference key="1">
    <citation type="submission" date="1998-09" db="EMBL/GenBank/DDBJ databases">
        <title>Rat protein kinase inhibitor p58 complete cDNA.</title>
        <authorList>
            <person name="Inada A."/>
            <person name="Yamada Y."/>
            <person name="Seino Y."/>
        </authorList>
    </citation>
    <scope>NUCLEOTIDE SEQUENCE [MRNA]</scope>
    <source>
        <tissue>Pancreas</tissue>
    </source>
</reference>
<reference key="2">
    <citation type="journal article" date="2004" name="Genome Res.">
        <title>The status, quality, and expansion of the NIH full-length cDNA project: the Mammalian Gene Collection (MGC).</title>
        <authorList>
            <consortium name="The MGC Project Team"/>
        </authorList>
    </citation>
    <scope>NUCLEOTIDE SEQUENCE [LARGE SCALE MRNA] OF 1-434</scope>
    <source>
        <tissue>Prostate</tissue>
    </source>
</reference>
<reference key="3">
    <citation type="journal article" date="2012" name="Nat. Commun.">
        <title>Quantitative maps of protein phosphorylation sites across 14 different rat organs and tissues.</title>
        <authorList>
            <person name="Lundby A."/>
            <person name="Secher A."/>
            <person name="Lage K."/>
            <person name="Nordsborg N.B."/>
            <person name="Dmytriyev A."/>
            <person name="Lundby C."/>
            <person name="Olsen J.V."/>
        </authorList>
    </citation>
    <scope>PHOSPHORYLATION [LARGE SCALE ANALYSIS] AT SER-475</scope>
    <scope>IDENTIFICATION BY MASS SPECTROMETRY [LARGE SCALE ANALYSIS]</scope>
</reference>
<organism>
    <name type="scientific">Rattus norvegicus</name>
    <name type="common">Rat</name>
    <dbReference type="NCBI Taxonomy" id="10116"/>
    <lineage>
        <taxon>Eukaryota</taxon>
        <taxon>Metazoa</taxon>
        <taxon>Chordata</taxon>
        <taxon>Craniata</taxon>
        <taxon>Vertebrata</taxon>
        <taxon>Euteleostomi</taxon>
        <taxon>Mammalia</taxon>
        <taxon>Eutheria</taxon>
        <taxon>Euarchontoglires</taxon>
        <taxon>Glires</taxon>
        <taxon>Rodentia</taxon>
        <taxon>Myomorpha</taxon>
        <taxon>Muroidea</taxon>
        <taxon>Muridae</taxon>
        <taxon>Murinae</taxon>
        <taxon>Rattus</taxon>
    </lineage>
</organism>
<gene>
    <name type="primary">Dnajc3</name>
    <name type="synonym">P58ipk</name>
</gene>
<comment type="function">
    <text evidence="1">Involved in the unfolded protein response (UPR) during ER stress. Co-chaperone of HSPA8/HSC70, it stimulates its ATPase activity. May inhibit both the autophosphorylation of EIF2AK2/PKR and the ability of EIF2AK2 to catalyze phosphorylation of the EIF2A. May inhibit EIF2AK3/PERK activity (By similarity).</text>
</comment>
<comment type="subunit">
    <text evidence="1">Interacts with EIF2AK2 and EIF2AK3. Forms a trimeric complex with DNAJB1 and HSPA8. Interacts with THAP12 (By similarity).</text>
</comment>
<comment type="subcellular location">
    <subcellularLocation>
        <location evidence="1">Endoplasmic reticulum</location>
    </subcellularLocation>
</comment>
<comment type="domain">
    <text>The J domain mediates interaction with HSPA8.</text>
</comment>
<comment type="domain">
    <text evidence="1">Binding to misfolded proteins is mediated by a hydrophobic patch forming a large groove within the first two TPR repeats.</text>
</comment>
<comment type="sequence caution" evidence="6">
    <conflict type="miscellaneous discrepancy">
        <sequence resource="EMBL-CDS" id="AAH61764"/>
    </conflict>
    <text>Contaminating sequence. Potential poly-A sequence.</text>
</comment>
<name>DNJC3_RAT</name>